<proteinExistence type="inferred from homology"/>
<name>RS10_PARUW</name>
<gene>
    <name evidence="1" type="primary">rpsJ</name>
    <name type="synonym">rs10</name>
    <name type="ordered locus">pc0206</name>
</gene>
<feature type="chain" id="PRO_0000146568" description="Small ribosomal subunit protein uS10">
    <location>
        <begin position="1"/>
        <end position="111"/>
    </location>
</feature>
<evidence type="ECO:0000255" key="1">
    <source>
        <dbReference type="HAMAP-Rule" id="MF_00508"/>
    </source>
</evidence>
<evidence type="ECO:0000305" key="2"/>
<comment type="function">
    <text evidence="1">Involved in the binding of tRNA to the ribosomes.</text>
</comment>
<comment type="subunit">
    <text evidence="1">Part of the 30S ribosomal subunit.</text>
</comment>
<comment type="similarity">
    <text evidence="1">Belongs to the universal ribosomal protein uS10 family.</text>
</comment>
<sequence length="111" mass="12505">MAKQEKQPKSARQKIRIRLKGYDQRLLDRSTGDIVETAKRTGAAIAGPIPLPTSCEKFTVLRSPNIDRKSREQFEIRTHRRLIDILNPTSKTIDALKTLTLPAGVDIKIKA</sequence>
<reference key="1">
    <citation type="journal article" date="2004" name="Science">
        <title>Illuminating the evolutionary history of chlamydiae.</title>
        <authorList>
            <person name="Horn M."/>
            <person name="Collingro A."/>
            <person name="Schmitz-Esser S."/>
            <person name="Beier C.L."/>
            <person name="Purkhold U."/>
            <person name="Fartmann B."/>
            <person name="Brandt P."/>
            <person name="Nyakatura G.J."/>
            <person name="Droege M."/>
            <person name="Frishman D."/>
            <person name="Rattei T."/>
            <person name="Mewes H.-W."/>
            <person name="Wagner M."/>
        </authorList>
    </citation>
    <scope>NUCLEOTIDE SEQUENCE [LARGE SCALE GENOMIC DNA]</scope>
    <source>
        <strain>UWE25</strain>
    </source>
</reference>
<accession>Q6MER9</accession>
<protein>
    <recommendedName>
        <fullName evidence="1">Small ribosomal subunit protein uS10</fullName>
    </recommendedName>
    <alternativeName>
        <fullName evidence="2">30S ribosomal protein S10</fullName>
    </alternativeName>
</protein>
<keyword id="KW-1185">Reference proteome</keyword>
<keyword id="KW-0687">Ribonucleoprotein</keyword>
<keyword id="KW-0689">Ribosomal protein</keyword>
<organism>
    <name type="scientific">Protochlamydia amoebophila (strain UWE25)</name>
    <dbReference type="NCBI Taxonomy" id="264201"/>
    <lineage>
        <taxon>Bacteria</taxon>
        <taxon>Pseudomonadati</taxon>
        <taxon>Chlamydiota</taxon>
        <taxon>Chlamydiia</taxon>
        <taxon>Parachlamydiales</taxon>
        <taxon>Parachlamydiaceae</taxon>
        <taxon>Candidatus Protochlamydia</taxon>
    </lineage>
</organism>
<dbReference type="EMBL" id="BX908798">
    <property type="protein sequence ID" value="CAF22930.1"/>
    <property type="molecule type" value="Genomic_DNA"/>
</dbReference>
<dbReference type="RefSeq" id="WP_011174756.1">
    <property type="nucleotide sequence ID" value="NC_005861.2"/>
</dbReference>
<dbReference type="SMR" id="Q6MER9"/>
<dbReference type="STRING" id="264201.pc0206"/>
<dbReference type="KEGG" id="pcu:PC_RS01010"/>
<dbReference type="eggNOG" id="COG0051">
    <property type="taxonomic scope" value="Bacteria"/>
</dbReference>
<dbReference type="HOGENOM" id="CLU_122625_1_3_0"/>
<dbReference type="OrthoDB" id="9804464at2"/>
<dbReference type="Proteomes" id="UP000000529">
    <property type="component" value="Chromosome"/>
</dbReference>
<dbReference type="GO" id="GO:1990904">
    <property type="term" value="C:ribonucleoprotein complex"/>
    <property type="evidence" value="ECO:0007669"/>
    <property type="project" value="UniProtKB-KW"/>
</dbReference>
<dbReference type="GO" id="GO:0005840">
    <property type="term" value="C:ribosome"/>
    <property type="evidence" value="ECO:0007669"/>
    <property type="project" value="UniProtKB-KW"/>
</dbReference>
<dbReference type="GO" id="GO:0003735">
    <property type="term" value="F:structural constituent of ribosome"/>
    <property type="evidence" value="ECO:0007669"/>
    <property type="project" value="InterPro"/>
</dbReference>
<dbReference type="GO" id="GO:0000049">
    <property type="term" value="F:tRNA binding"/>
    <property type="evidence" value="ECO:0007669"/>
    <property type="project" value="UniProtKB-UniRule"/>
</dbReference>
<dbReference type="GO" id="GO:0006412">
    <property type="term" value="P:translation"/>
    <property type="evidence" value="ECO:0007669"/>
    <property type="project" value="UniProtKB-UniRule"/>
</dbReference>
<dbReference type="FunFam" id="3.30.70.600:FF:000003">
    <property type="entry name" value="30S ribosomal protein S10"/>
    <property type="match status" value="1"/>
</dbReference>
<dbReference type="Gene3D" id="3.30.70.600">
    <property type="entry name" value="Ribosomal protein S10 domain"/>
    <property type="match status" value="1"/>
</dbReference>
<dbReference type="HAMAP" id="MF_00508">
    <property type="entry name" value="Ribosomal_uS10"/>
    <property type="match status" value="1"/>
</dbReference>
<dbReference type="InterPro" id="IPR001848">
    <property type="entry name" value="Ribosomal_uS10"/>
</dbReference>
<dbReference type="InterPro" id="IPR018268">
    <property type="entry name" value="Ribosomal_uS10_CS"/>
</dbReference>
<dbReference type="InterPro" id="IPR027486">
    <property type="entry name" value="Ribosomal_uS10_dom"/>
</dbReference>
<dbReference type="InterPro" id="IPR036838">
    <property type="entry name" value="Ribosomal_uS10_dom_sf"/>
</dbReference>
<dbReference type="NCBIfam" id="NF001861">
    <property type="entry name" value="PRK00596.1"/>
    <property type="match status" value="1"/>
</dbReference>
<dbReference type="NCBIfam" id="TIGR01049">
    <property type="entry name" value="rpsJ_bact"/>
    <property type="match status" value="1"/>
</dbReference>
<dbReference type="PANTHER" id="PTHR11700">
    <property type="entry name" value="30S RIBOSOMAL PROTEIN S10 FAMILY MEMBER"/>
    <property type="match status" value="1"/>
</dbReference>
<dbReference type="Pfam" id="PF00338">
    <property type="entry name" value="Ribosomal_S10"/>
    <property type="match status" value="1"/>
</dbReference>
<dbReference type="PRINTS" id="PR00971">
    <property type="entry name" value="RIBOSOMALS10"/>
</dbReference>
<dbReference type="SMART" id="SM01403">
    <property type="entry name" value="Ribosomal_S10"/>
    <property type="match status" value="1"/>
</dbReference>
<dbReference type="SUPFAM" id="SSF54999">
    <property type="entry name" value="Ribosomal protein S10"/>
    <property type="match status" value="1"/>
</dbReference>
<dbReference type="PROSITE" id="PS00361">
    <property type="entry name" value="RIBOSOMAL_S10"/>
    <property type="match status" value="1"/>
</dbReference>